<accession>Q9BT04</accession>
<accession>B2RD86</accession>
<accession>B5MDH0</accession>
<accession>Q6PJY0</accession>
<accession>Q9H613</accession>
<proteinExistence type="evidence at protein level"/>
<comment type="function">
    <text evidence="2">Probable planar cell polarity effector involved in cilium biogenesis. May regulate protein and membrane transport to the cilium. Proposed to function as core component of the CPLANE (ciliogenesis and planar polarity effectors) complex involved in the recruitment of peripheral IFT-A proteins to basal bodies. May regulate the morphogenesis of hair follicles which depends on functional primary cilia. Binds phosphatidylinositol 3-phosphate with highest affinity, followed by phosphatidylinositol 4-phosphate and phosphatidylinositol 5-phosphate (By similarity).</text>
</comment>
<comment type="subunit">
    <text evidence="2 3">Component of the CPLANE (ciliogenesis and planar polarity effectors) complex, composed of INTU, FUZ and WDPCP. Interacts with CPLANE2 (PubMed:35427153). Interacts with CPLANE1 (By similarity).</text>
</comment>
<comment type="interaction">
    <interactant intactId="EBI-750341">
        <id>Q9BT04</id>
    </interactant>
    <interactant intactId="EBI-750332">
        <id>Q9BU20</id>
        <label>CPLANE2</label>
    </interactant>
    <organismsDiffer>false</organismsDiffer>
    <experiments>11</experiments>
</comment>
<comment type="interaction">
    <interactant intactId="EBI-750341">
        <id>Q9BT04</id>
    </interactant>
    <interactant intactId="EBI-713068">
        <id>Q96FC9</id>
        <label>DDX11</label>
    </interactant>
    <organismsDiffer>false</organismsDiffer>
    <experiments>2</experiments>
</comment>
<comment type="interaction">
    <interactant intactId="EBI-750341">
        <id>Q9BT04</id>
    </interactant>
    <interactant intactId="EBI-11762696">
        <id>Q9ULD6</id>
        <label>INTU</label>
    </interactant>
    <organismsDiffer>false</organismsDiffer>
    <experiments>3</experiments>
</comment>
<comment type="subcellular location">
    <subcellularLocation>
        <location evidence="1">Cytoplasm</location>
    </subcellularLocation>
    <subcellularLocation>
        <location evidence="1">Cytoplasm</location>
        <location evidence="1">Cytoskeleton</location>
    </subcellularLocation>
    <subcellularLocation>
        <location evidence="2">Cytoplasm</location>
        <location evidence="2">Cytoskeleton</location>
        <location evidence="2">Cilium basal body</location>
    </subcellularLocation>
</comment>
<comment type="alternative products">
    <event type="alternative splicing"/>
    <isoform>
        <id>Q9BT04-1</id>
        <name>1</name>
        <sequence type="displayed"/>
    </isoform>
    <isoform>
        <id>Q9BT04-2</id>
        <name>2</name>
        <sequence type="described" ref="VSP_029966"/>
    </isoform>
    <isoform>
        <id>Q9BT04-3</id>
        <name>3</name>
        <sequence type="described" ref="VSP_029965"/>
    </isoform>
</comment>
<comment type="similarity">
    <text evidence="6">Belongs to the fuzzy family.</text>
</comment>
<comment type="sequence caution" evidence="6">
    <conflict type="frameshift">
        <sequence resource="EMBL-CDS" id="AAH10092"/>
    </conflict>
</comment>
<keyword id="KW-0002">3D-structure</keyword>
<keyword id="KW-0025">Alternative splicing</keyword>
<keyword id="KW-0966">Cell projection</keyword>
<keyword id="KW-0970">Cilium biogenesis/degradation</keyword>
<keyword id="KW-0963">Cytoplasm</keyword>
<keyword id="KW-0206">Cytoskeleton</keyword>
<keyword id="KW-0217">Developmental protein</keyword>
<keyword id="KW-0653">Protein transport</keyword>
<keyword id="KW-1267">Proteomics identification</keyword>
<keyword id="KW-1185">Reference proteome</keyword>
<keyword id="KW-0813">Transport</keyword>
<gene>
    <name type="primary">FUZ</name>
    <name type="synonym">FY</name>
</gene>
<evidence type="ECO:0000250" key="1">
    <source>
        <dbReference type="UniProtKB" id="Q2HZX7"/>
    </source>
</evidence>
<evidence type="ECO:0000250" key="2">
    <source>
        <dbReference type="UniProtKB" id="Q3UYI6"/>
    </source>
</evidence>
<evidence type="ECO:0000269" key="3">
    <source>
    </source>
</evidence>
<evidence type="ECO:0000303" key="4">
    <source>
    </source>
</evidence>
<evidence type="ECO:0000303" key="5">
    <source>
    </source>
</evidence>
<evidence type="ECO:0000305" key="6"/>
<evidence type="ECO:0007744" key="7">
    <source>
        <dbReference type="PDB" id="7Q3D"/>
    </source>
</evidence>
<evidence type="ECO:0007829" key="8">
    <source>
        <dbReference type="PDB" id="7Q3D"/>
    </source>
</evidence>
<dbReference type="EMBL" id="AK026341">
    <property type="protein sequence ID" value="BAB15454.1"/>
    <property type="molecule type" value="mRNA"/>
</dbReference>
<dbReference type="EMBL" id="AK315445">
    <property type="protein sequence ID" value="BAG37833.1"/>
    <property type="molecule type" value="mRNA"/>
</dbReference>
<dbReference type="EMBL" id="AC006942">
    <property type="status" value="NOT_ANNOTATED_CDS"/>
    <property type="molecule type" value="Genomic_DNA"/>
</dbReference>
<dbReference type="EMBL" id="CH471177">
    <property type="protein sequence ID" value="EAW52538.1"/>
    <property type="molecule type" value="Genomic_DNA"/>
</dbReference>
<dbReference type="EMBL" id="CH471177">
    <property type="protein sequence ID" value="EAW52541.1"/>
    <property type="molecule type" value="Genomic_DNA"/>
</dbReference>
<dbReference type="EMBL" id="BC004445">
    <property type="protein sequence ID" value="AAH04445.1"/>
    <property type="molecule type" value="mRNA"/>
</dbReference>
<dbReference type="EMBL" id="BC010092">
    <property type="protein sequence ID" value="AAH10092.1"/>
    <property type="status" value="ALT_FRAME"/>
    <property type="molecule type" value="mRNA"/>
</dbReference>
<dbReference type="EMBL" id="BC016793">
    <property type="protein sequence ID" value="AAH16793.1"/>
    <property type="molecule type" value="mRNA"/>
</dbReference>
<dbReference type="CCDS" id="CCDS12781.1">
    <molecule id="Q9BT04-1"/>
</dbReference>
<dbReference type="CCDS" id="CCDS54293.1">
    <molecule id="Q9BT04-3"/>
</dbReference>
<dbReference type="RefSeq" id="NP_001165408.1">
    <molecule id="Q9BT04-3"/>
    <property type="nucleotide sequence ID" value="NM_001171937.2"/>
</dbReference>
<dbReference type="RefSeq" id="NP_079405.2">
    <molecule id="Q9BT04-1"/>
    <property type="nucleotide sequence ID" value="NM_025129.4"/>
</dbReference>
<dbReference type="PDB" id="7Q3D">
    <property type="method" value="EM"/>
    <property type="resolution" value="3.35 A"/>
    <property type="chains" value="C=1-418"/>
</dbReference>
<dbReference type="PDBsum" id="7Q3D"/>
<dbReference type="EMDB" id="EMD-13789"/>
<dbReference type="SMR" id="Q9BT04"/>
<dbReference type="BioGRID" id="123171">
    <property type="interactions" value="23"/>
</dbReference>
<dbReference type="ComplexPortal" id="CPX-5001">
    <property type="entry name" value="CPLANE complex"/>
</dbReference>
<dbReference type="FunCoup" id="Q9BT04">
    <property type="interactions" value="219"/>
</dbReference>
<dbReference type="IntAct" id="Q9BT04">
    <property type="interactions" value="17"/>
</dbReference>
<dbReference type="MINT" id="Q9BT04"/>
<dbReference type="STRING" id="9606.ENSP00000313309"/>
<dbReference type="GlyCosmos" id="Q9BT04">
    <property type="glycosylation" value="1 site, 1 glycan"/>
</dbReference>
<dbReference type="GlyGen" id="Q9BT04">
    <property type="glycosylation" value="1 site, 1 O-linked glycan (1 site)"/>
</dbReference>
<dbReference type="iPTMnet" id="Q9BT04"/>
<dbReference type="PhosphoSitePlus" id="Q9BT04"/>
<dbReference type="BioMuta" id="FUZ"/>
<dbReference type="DMDM" id="74733071"/>
<dbReference type="jPOST" id="Q9BT04"/>
<dbReference type="MassIVE" id="Q9BT04"/>
<dbReference type="PaxDb" id="9606-ENSP00000313309"/>
<dbReference type="PeptideAtlas" id="Q9BT04"/>
<dbReference type="ProteomicsDB" id="78936">
    <molecule id="Q9BT04-1"/>
</dbReference>
<dbReference type="ProteomicsDB" id="78937">
    <molecule id="Q9BT04-2"/>
</dbReference>
<dbReference type="ProteomicsDB" id="78938">
    <molecule id="Q9BT04-3"/>
</dbReference>
<dbReference type="Pumba" id="Q9BT04"/>
<dbReference type="Antibodypedia" id="49155">
    <property type="antibodies" value="99 antibodies from 21 providers"/>
</dbReference>
<dbReference type="DNASU" id="80199"/>
<dbReference type="Ensembl" id="ENST00000313777.9">
    <molecule id="Q9BT04-1"/>
    <property type="protein sequence ID" value="ENSP00000313309.4"/>
    <property type="gene ID" value="ENSG00000010361.14"/>
</dbReference>
<dbReference type="Ensembl" id="ENST00000528094.5">
    <molecule id="Q9BT04-3"/>
    <property type="protein sequence ID" value="ENSP00000435177.1"/>
    <property type="gene ID" value="ENSG00000010361.14"/>
</dbReference>
<dbReference type="GeneID" id="80199"/>
<dbReference type="KEGG" id="hsa:80199"/>
<dbReference type="MANE-Select" id="ENST00000313777.9">
    <property type="protein sequence ID" value="ENSP00000313309.4"/>
    <property type="RefSeq nucleotide sequence ID" value="NM_025129.5"/>
    <property type="RefSeq protein sequence ID" value="NP_079405.2"/>
</dbReference>
<dbReference type="UCSC" id="uc002ppq.4">
    <molecule id="Q9BT04-1"/>
    <property type="organism name" value="human"/>
</dbReference>
<dbReference type="AGR" id="HGNC:26219"/>
<dbReference type="CTD" id="80199"/>
<dbReference type="DisGeNET" id="80199"/>
<dbReference type="GeneCards" id="FUZ"/>
<dbReference type="HGNC" id="HGNC:26219">
    <property type="gene designation" value="FUZ"/>
</dbReference>
<dbReference type="HPA" id="ENSG00000010361">
    <property type="expression patterns" value="Tissue enhanced (testis)"/>
</dbReference>
<dbReference type="MalaCards" id="FUZ"/>
<dbReference type="MIM" id="610622">
    <property type="type" value="gene"/>
</dbReference>
<dbReference type="neXtProt" id="NX_Q9BT04"/>
<dbReference type="OpenTargets" id="ENSG00000010361"/>
<dbReference type="Orphanet" id="3027">
    <property type="disease" value="Caudal regression syndrome"/>
</dbReference>
<dbReference type="Orphanet" id="620158">
    <property type="disease" value="Non-syndromic non-specific multisutural craniosynostosis"/>
</dbReference>
<dbReference type="PharmGKB" id="PA145148782"/>
<dbReference type="VEuPathDB" id="HostDB:ENSG00000010361"/>
<dbReference type="eggNOG" id="ENOG502QVMY">
    <property type="taxonomic scope" value="Eukaryota"/>
</dbReference>
<dbReference type="GeneTree" id="ENSGT00390000010727"/>
<dbReference type="HOGENOM" id="CLU_041212_1_0_1"/>
<dbReference type="InParanoid" id="Q9BT04"/>
<dbReference type="OMA" id="LDQYSCS"/>
<dbReference type="OrthoDB" id="74835at2759"/>
<dbReference type="PAN-GO" id="Q9BT04">
    <property type="GO annotations" value="1 GO annotation based on evolutionary models"/>
</dbReference>
<dbReference type="PhylomeDB" id="Q9BT04"/>
<dbReference type="TreeFam" id="TF324763"/>
<dbReference type="PathwayCommons" id="Q9BT04"/>
<dbReference type="Reactome" id="R-HSA-5610787">
    <property type="pathway name" value="Hedgehog 'off' state"/>
</dbReference>
<dbReference type="SignaLink" id="Q9BT04"/>
<dbReference type="BioGRID-ORCS" id="80199">
    <property type="hits" value="11 hits in 1159 CRISPR screens"/>
</dbReference>
<dbReference type="GenomeRNAi" id="80199"/>
<dbReference type="Pharos" id="Q9BT04">
    <property type="development level" value="Tbio"/>
</dbReference>
<dbReference type="PRO" id="PR:Q9BT04"/>
<dbReference type="Proteomes" id="UP000005640">
    <property type="component" value="Chromosome 19"/>
</dbReference>
<dbReference type="RNAct" id="Q9BT04">
    <property type="molecule type" value="protein"/>
</dbReference>
<dbReference type="Bgee" id="ENSG00000010361">
    <property type="expression patterns" value="Expressed in right uterine tube and 171 other cell types or tissues"/>
</dbReference>
<dbReference type="ExpressionAtlas" id="Q9BT04">
    <property type="expression patterns" value="baseline and differential"/>
</dbReference>
<dbReference type="GO" id="GO:0005929">
    <property type="term" value="C:cilium"/>
    <property type="evidence" value="ECO:0000303"/>
    <property type="project" value="ComplexPortal"/>
</dbReference>
<dbReference type="GO" id="GO:0005737">
    <property type="term" value="C:cytoplasm"/>
    <property type="evidence" value="ECO:0007669"/>
    <property type="project" value="UniProtKB-SubCell"/>
</dbReference>
<dbReference type="GO" id="GO:0005856">
    <property type="term" value="C:cytoskeleton"/>
    <property type="evidence" value="ECO:0007669"/>
    <property type="project" value="UniProtKB-SubCell"/>
</dbReference>
<dbReference type="GO" id="GO:0070062">
    <property type="term" value="C:extracellular exosome"/>
    <property type="evidence" value="ECO:0007005"/>
    <property type="project" value="UniProtKB"/>
</dbReference>
<dbReference type="GO" id="GO:0035091">
    <property type="term" value="F:phosphatidylinositol binding"/>
    <property type="evidence" value="ECO:0000250"/>
    <property type="project" value="UniProtKB"/>
</dbReference>
<dbReference type="GO" id="GO:0060271">
    <property type="term" value="P:cilium assembly"/>
    <property type="evidence" value="ECO:0000250"/>
    <property type="project" value="UniProtKB"/>
</dbReference>
<dbReference type="GO" id="GO:0010172">
    <property type="term" value="P:embryonic body morphogenesis"/>
    <property type="evidence" value="ECO:0000250"/>
    <property type="project" value="UniProtKB"/>
</dbReference>
<dbReference type="GO" id="GO:0048704">
    <property type="term" value="P:embryonic skeletal system morphogenesis"/>
    <property type="evidence" value="ECO:0000250"/>
    <property type="project" value="UniProtKB"/>
</dbReference>
<dbReference type="GO" id="GO:0001736">
    <property type="term" value="P:establishment of planar polarity"/>
    <property type="evidence" value="ECO:0000250"/>
    <property type="project" value="UniProtKB"/>
</dbReference>
<dbReference type="GO" id="GO:0001942">
    <property type="term" value="P:hair follicle development"/>
    <property type="evidence" value="ECO:0000250"/>
    <property type="project" value="UniProtKB"/>
</dbReference>
<dbReference type="GO" id="GO:0042073">
    <property type="term" value="P:intraciliary transport"/>
    <property type="evidence" value="ECO:0000303"/>
    <property type="project" value="ComplexPortal"/>
</dbReference>
<dbReference type="GO" id="GO:0090090">
    <property type="term" value="P:negative regulation of canonical Wnt signaling pathway"/>
    <property type="evidence" value="ECO:0000250"/>
    <property type="project" value="UniProtKB"/>
</dbReference>
<dbReference type="GO" id="GO:0030336">
    <property type="term" value="P:negative regulation of cell migration"/>
    <property type="evidence" value="ECO:0000315"/>
    <property type="project" value="UniProtKB"/>
</dbReference>
<dbReference type="GO" id="GO:0008285">
    <property type="term" value="P:negative regulation of cell population proliferation"/>
    <property type="evidence" value="ECO:0000250"/>
    <property type="project" value="UniProtKB"/>
</dbReference>
<dbReference type="GO" id="GO:2000314">
    <property type="term" value="P:negative regulation of fibroblast growth factor receptor signaling pathway involved in neural plate anterior/posterior pattern formation"/>
    <property type="evidence" value="ECO:0000250"/>
    <property type="project" value="UniProtKB"/>
</dbReference>
<dbReference type="GO" id="GO:0090301">
    <property type="term" value="P:negative regulation of neural crest formation"/>
    <property type="evidence" value="ECO:0000250"/>
    <property type="project" value="UniProtKB"/>
</dbReference>
<dbReference type="GO" id="GO:0001843">
    <property type="term" value="P:neural tube closure"/>
    <property type="evidence" value="ECO:0000315"/>
    <property type="project" value="UniProtKB"/>
</dbReference>
<dbReference type="GO" id="GO:0021915">
    <property type="term" value="P:neural tube development"/>
    <property type="evidence" value="ECO:0000303"/>
    <property type="project" value="ComplexPortal"/>
</dbReference>
<dbReference type="GO" id="GO:1905515">
    <property type="term" value="P:non-motile cilium assembly"/>
    <property type="evidence" value="ECO:0000315"/>
    <property type="project" value="UniProtKB"/>
</dbReference>
<dbReference type="GO" id="GO:0045724">
    <property type="term" value="P:positive regulation of cilium assembly"/>
    <property type="evidence" value="ECO:0000315"/>
    <property type="project" value="UniProtKB"/>
</dbReference>
<dbReference type="GO" id="GO:0015031">
    <property type="term" value="P:protein transport"/>
    <property type="evidence" value="ECO:0007669"/>
    <property type="project" value="UniProtKB-KW"/>
</dbReference>
<dbReference type="GO" id="GO:1902017">
    <property type="term" value="P:regulation of cilium assembly"/>
    <property type="evidence" value="ECO:0000303"/>
    <property type="project" value="ComplexPortal"/>
</dbReference>
<dbReference type="GO" id="GO:0008589">
    <property type="term" value="P:regulation of smoothened signaling pathway"/>
    <property type="evidence" value="ECO:0000250"/>
    <property type="project" value="UniProtKB"/>
</dbReference>
<dbReference type="GO" id="GO:0016192">
    <property type="term" value="P:vesicle-mediated transport"/>
    <property type="evidence" value="ECO:0007669"/>
    <property type="project" value="InterPro"/>
</dbReference>
<dbReference type="CDD" id="cd21091">
    <property type="entry name" value="Fuzzy"/>
    <property type="match status" value="1"/>
</dbReference>
<dbReference type="InterPro" id="IPR043972">
    <property type="entry name" value="FUZ/MON1/HPS1_longin_1"/>
</dbReference>
<dbReference type="InterPro" id="IPR043971">
    <property type="entry name" value="FUZ/MON1/HPS1_longin_2"/>
</dbReference>
<dbReference type="InterPro" id="IPR043970">
    <property type="entry name" value="FUZ/MON1/HPS1_longin_3"/>
</dbReference>
<dbReference type="InterPro" id="IPR026069">
    <property type="entry name" value="Fuzzy"/>
</dbReference>
<dbReference type="PANTHER" id="PTHR13559">
    <property type="entry name" value="INTRACELLULAR TRAFFIC PROTEIN-RELATED"/>
    <property type="match status" value="1"/>
</dbReference>
<dbReference type="PANTHER" id="PTHR13559:SF1">
    <property type="entry name" value="PROTEIN FUZZY HOMOLOG"/>
    <property type="match status" value="1"/>
</dbReference>
<dbReference type="Pfam" id="PF19036">
    <property type="entry name" value="Fuz_longin_1"/>
    <property type="match status" value="1"/>
</dbReference>
<dbReference type="Pfam" id="PF19037">
    <property type="entry name" value="Fuz_longin_2"/>
    <property type="match status" value="1"/>
</dbReference>
<dbReference type="Pfam" id="PF19038">
    <property type="entry name" value="Fuz_longin_3"/>
    <property type="match status" value="1"/>
</dbReference>
<reference key="1">
    <citation type="journal article" date="2004" name="Nat. Genet.">
        <title>Complete sequencing and characterization of 21,243 full-length human cDNAs.</title>
        <authorList>
            <person name="Ota T."/>
            <person name="Suzuki Y."/>
            <person name="Nishikawa T."/>
            <person name="Otsuki T."/>
            <person name="Sugiyama T."/>
            <person name="Irie R."/>
            <person name="Wakamatsu A."/>
            <person name="Hayashi K."/>
            <person name="Sato H."/>
            <person name="Nagai K."/>
            <person name="Kimura K."/>
            <person name="Makita H."/>
            <person name="Sekine M."/>
            <person name="Obayashi M."/>
            <person name="Nishi T."/>
            <person name="Shibahara T."/>
            <person name="Tanaka T."/>
            <person name="Ishii S."/>
            <person name="Yamamoto J."/>
            <person name="Saito K."/>
            <person name="Kawai Y."/>
            <person name="Isono Y."/>
            <person name="Nakamura Y."/>
            <person name="Nagahari K."/>
            <person name="Murakami K."/>
            <person name="Yasuda T."/>
            <person name="Iwayanagi T."/>
            <person name="Wagatsuma M."/>
            <person name="Shiratori A."/>
            <person name="Sudo H."/>
            <person name="Hosoiri T."/>
            <person name="Kaku Y."/>
            <person name="Kodaira H."/>
            <person name="Kondo H."/>
            <person name="Sugawara M."/>
            <person name="Takahashi M."/>
            <person name="Kanda K."/>
            <person name="Yokoi T."/>
            <person name="Furuya T."/>
            <person name="Kikkawa E."/>
            <person name="Omura Y."/>
            <person name="Abe K."/>
            <person name="Kamihara K."/>
            <person name="Katsuta N."/>
            <person name="Sato K."/>
            <person name="Tanikawa M."/>
            <person name="Yamazaki M."/>
            <person name="Ninomiya K."/>
            <person name="Ishibashi T."/>
            <person name="Yamashita H."/>
            <person name="Murakawa K."/>
            <person name="Fujimori K."/>
            <person name="Tanai H."/>
            <person name="Kimata M."/>
            <person name="Watanabe M."/>
            <person name="Hiraoka S."/>
            <person name="Chiba Y."/>
            <person name="Ishida S."/>
            <person name="Ono Y."/>
            <person name="Takiguchi S."/>
            <person name="Watanabe S."/>
            <person name="Yosida M."/>
            <person name="Hotuta T."/>
            <person name="Kusano J."/>
            <person name="Kanehori K."/>
            <person name="Takahashi-Fujii A."/>
            <person name="Hara H."/>
            <person name="Tanase T.-O."/>
            <person name="Nomura Y."/>
            <person name="Togiya S."/>
            <person name="Komai F."/>
            <person name="Hara R."/>
            <person name="Takeuchi K."/>
            <person name="Arita M."/>
            <person name="Imose N."/>
            <person name="Musashino K."/>
            <person name="Yuuki H."/>
            <person name="Oshima A."/>
            <person name="Sasaki N."/>
            <person name="Aotsuka S."/>
            <person name="Yoshikawa Y."/>
            <person name="Matsunawa H."/>
            <person name="Ichihara T."/>
            <person name="Shiohata N."/>
            <person name="Sano S."/>
            <person name="Moriya S."/>
            <person name="Momiyama H."/>
            <person name="Satoh N."/>
            <person name="Takami S."/>
            <person name="Terashima Y."/>
            <person name="Suzuki O."/>
            <person name="Nakagawa S."/>
            <person name="Senoh A."/>
            <person name="Mizoguchi H."/>
            <person name="Goto Y."/>
            <person name="Shimizu F."/>
            <person name="Wakebe H."/>
            <person name="Hishigaki H."/>
            <person name="Watanabe T."/>
            <person name="Sugiyama A."/>
            <person name="Takemoto M."/>
            <person name="Kawakami B."/>
            <person name="Yamazaki M."/>
            <person name="Watanabe K."/>
            <person name="Kumagai A."/>
            <person name="Itakura S."/>
            <person name="Fukuzumi Y."/>
            <person name="Fujimori Y."/>
            <person name="Komiyama M."/>
            <person name="Tashiro H."/>
            <person name="Tanigami A."/>
            <person name="Fujiwara T."/>
            <person name="Ono T."/>
            <person name="Yamada K."/>
            <person name="Fujii Y."/>
            <person name="Ozaki K."/>
            <person name="Hirao M."/>
            <person name="Ohmori Y."/>
            <person name="Kawabata A."/>
            <person name="Hikiji T."/>
            <person name="Kobatake N."/>
            <person name="Inagaki H."/>
            <person name="Ikema Y."/>
            <person name="Okamoto S."/>
            <person name="Okitani R."/>
            <person name="Kawakami T."/>
            <person name="Noguchi S."/>
            <person name="Itoh T."/>
            <person name="Shigeta K."/>
            <person name="Senba T."/>
            <person name="Matsumura K."/>
            <person name="Nakajima Y."/>
            <person name="Mizuno T."/>
            <person name="Morinaga M."/>
            <person name="Sasaki M."/>
            <person name="Togashi T."/>
            <person name="Oyama M."/>
            <person name="Hata H."/>
            <person name="Watanabe M."/>
            <person name="Komatsu T."/>
            <person name="Mizushima-Sugano J."/>
            <person name="Satoh T."/>
            <person name="Shirai Y."/>
            <person name="Takahashi Y."/>
            <person name="Nakagawa K."/>
            <person name="Okumura K."/>
            <person name="Nagase T."/>
            <person name="Nomura N."/>
            <person name="Kikuchi H."/>
            <person name="Masuho Y."/>
            <person name="Yamashita R."/>
            <person name="Nakai K."/>
            <person name="Yada T."/>
            <person name="Nakamura Y."/>
            <person name="Ohara O."/>
            <person name="Isogai T."/>
            <person name="Sugano S."/>
        </authorList>
    </citation>
    <scope>NUCLEOTIDE SEQUENCE [LARGE SCALE MRNA] (ISOFORMS 1 AND 2)</scope>
    <source>
        <tissue>Heart</tissue>
        <tissue>Small intestine</tissue>
    </source>
</reference>
<reference key="2">
    <citation type="journal article" date="2004" name="Nature">
        <title>The DNA sequence and biology of human chromosome 19.</title>
        <authorList>
            <person name="Grimwood J."/>
            <person name="Gordon L.A."/>
            <person name="Olsen A.S."/>
            <person name="Terry A."/>
            <person name="Schmutz J."/>
            <person name="Lamerdin J.E."/>
            <person name="Hellsten U."/>
            <person name="Goodstein D."/>
            <person name="Couronne O."/>
            <person name="Tran-Gyamfi M."/>
            <person name="Aerts A."/>
            <person name="Altherr M."/>
            <person name="Ashworth L."/>
            <person name="Bajorek E."/>
            <person name="Black S."/>
            <person name="Branscomb E."/>
            <person name="Caenepeel S."/>
            <person name="Carrano A.V."/>
            <person name="Caoile C."/>
            <person name="Chan Y.M."/>
            <person name="Christensen M."/>
            <person name="Cleland C.A."/>
            <person name="Copeland A."/>
            <person name="Dalin E."/>
            <person name="Dehal P."/>
            <person name="Denys M."/>
            <person name="Detter J.C."/>
            <person name="Escobar J."/>
            <person name="Flowers D."/>
            <person name="Fotopulos D."/>
            <person name="Garcia C."/>
            <person name="Georgescu A.M."/>
            <person name="Glavina T."/>
            <person name="Gomez M."/>
            <person name="Gonzales E."/>
            <person name="Groza M."/>
            <person name="Hammon N."/>
            <person name="Hawkins T."/>
            <person name="Haydu L."/>
            <person name="Ho I."/>
            <person name="Huang W."/>
            <person name="Israni S."/>
            <person name="Jett J."/>
            <person name="Kadner K."/>
            <person name="Kimball H."/>
            <person name="Kobayashi A."/>
            <person name="Larionov V."/>
            <person name="Leem S.-H."/>
            <person name="Lopez F."/>
            <person name="Lou Y."/>
            <person name="Lowry S."/>
            <person name="Malfatti S."/>
            <person name="Martinez D."/>
            <person name="McCready P.M."/>
            <person name="Medina C."/>
            <person name="Morgan J."/>
            <person name="Nelson K."/>
            <person name="Nolan M."/>
            <person name="Ovcharenko I."/>
            <person name="Pitluck S."/>
            <person name="Pollard M."/>
            <person name="Popkie A.P."/>
            <person name="Predki P."/>
            <person name="Quan G."/>
            <person name="Ramirez L."/>
            <person name="Rash S."/>
            <person name="Retterer J."/>
            <person name="Rodriguez A."/>
            <person name="Rogers S."/>
            <person name="Salamov A."/>
            <person name="Salazar A."/>
            <person name="She X."/>
            <person name="Smith D."/>
            <person name="Slezak T."/>
            <person name="Solovyev V."/>
            <person name="Thayer N."/>
            <person name="Tice H."/>
            <person name="Tsai M."/>
            <person name="Ustaszewska A."/>
            <person name="Vo N."/>
            <person name="Wagner M."/>
            <person name="Wheeler J."/>
            <person name="Wu K."/>
            <person name="Xie G."/>
            <person name="Yang J."/>
            <person name="Dubchak I."/>
            <person name="Furey T.S."/>
            <person name="DeJong P."/>
            <person name="Dickson M."/>
            <person name="Gordon D."/>
            <person name="Eichler E.E."/>
            <person name="Pennacchio L.A."/>
            <person name="Richardson P."/>
            <person name="Stubbs L."/>
            <person name="Rokhsar D.S."/>
            <person name="Myers R.M."/>
            <person name="Rubin E.M."/>
            <person name="Lucas S.M."/>
        </authorList>
    </citation>
    <scope>NUCLEOTIDE SEQUENCE [LARGE SCALE GENOMIC DNA]</scope>
</reference>
<reference key="3">
    <citation type="submission" date="2005-07" db="EMBL/GenBank/DDBJ databases">
        <authorList>
            <person name="Mural R.J."/>
            <person name="Istrail S."/>
            <person name="Sutton G.G."/>
            <person name="Florea L."/>
            <person name="Halpern A.L."/>
            <person name="Mobarry C.M."/>
            <person name="Lippert R."/>
            <person name="Walenz B."/>
            <person name="Shatkay H."/>
            <person name="Dew I."/>
            <person name="Miller J.R."/>
            <person name="Flanigan M.J."/>
            <person name="Edwards N.J."/>
            <person name="Bolanos R."/>
            <person name="Fasulo D."/>
            <person name="Halldorsson B.V."/>
            <person name="Hannenhalli S."/>
            <person name="Turner R."/>
            <person name="Yooseph S."/>
            <person name="Lu F."/>
            <person name="Nusskern D.R."/>
            <person name="Shue B.C."/>
            <person name="Zheng X.H."/>
            <person name="Zhong F."/>
            <person name="Delcher A.L."/>
            <person name="Huson D.H."/>
            <person name="Kravitz S.A."/>
            <person name="Mouchard L."/>
            <person name="Reinert K."/>
            <person name="Remington K.A."/>
            <person name="Clark A.G."/>
            <person name="Waterman M.S."/>
            <person name="Eichler E.E."/>
            <person name="Adams M.D."/>
            <person name="Hunkapiller M.W."/>
            <person name="Myers E.W."/>
            <person name="Venter J.C."/>
        </authorList>
    </citation>
    <scope>NUCLEOTIDE SEQUENCE [LARGE SCALE GENOMIC DNA]</scope>
</reference>
<reference key="4">
    <citation type="journal article" date="2004" name="Genome Res.">
        <title>The status, quality, and expansion of the NIH full-length cDNA project: the Mammalian Gene Collection (MGC).</title>
        <authorList>
            <consortium name="The MGC Project Team"/>
        </authorList>
    </citation>
    <scope>NUCLEOTIDE SEQUENCE [LARGE SCALE MRNA] (ISOFORMS 1 AND 3)</scope>
    <source>
        <tissue>Eye</tissue>
        <tissue>Lung</tissue>
    </source>
</reference>
<reference evidence="7" key="5">
    <citation type="journal article" date="2022" name="Sci. Adv.">
        <title>Structure of the ciliogenesis-associated CPLANE complex.</title>
        <authorList>
            <person name="Langousis G."/>
            <person name="Cavadini S."/>
            <person name="Boegholm N."/>
            <person name="Lorentzen E."/>
            <person name="Kempf G."/>
            <person name="Matthias P."/>
        </authorList>
    </citation>
    <scope>STRUCTURE BY ELECTRON MICROSCOPY (3.35 ANGSTROMS)</scope>
    <scope>IDENTIFICATION IN THE CPLANE COMPLEX</scope>
    <scope>INTERACTION WITH CPLANE2</scope>
</reference>
<organism>
    <name type="scientific">Homo sapiens</name>
    <name type="common">Human</name>
    <dbReference type="NCBI Taxonomy" id="9606"/>
    <lineage>
        <taxon>Eukaryota</taxon>
        <taxon>Metazoa</taxon>
        <taxon>Chordata</taxon>
        <taxon>Craniata</taxon>
        <taxon>Vertebrata</taxon>
        <taxon>Euteleostomi</taxon>
        <taxon>Mammalia</taxon>
        <taxon>Eutheria</taxon>
        <taxon>Euarchontoglires</taxon>
        <taxon>Primates</taxon>
        <taxon>Haplorrhini</taxon>
        <taxon>Catarrhini</taxon>
        <taxon>Hominidae</taxon>
        <taxon>Homo</taxon>
    </lineage>
</organism>
<name>FUZZY_HUMAN</name>
<protein>
    <recommendedName>
        <fullName>Protein fuzzy homolog</fullName>
    </recommendedName>
</protein>
<feature type="chain" id="PRO_0000312920" description="Protein fuzzy homolog">
    <location>
        <begin position="1"/>
        <end position="418"/>
    </location>
</feature>
<feature type="splice variant" id="VSP_029965" description="In isoform 3." evidence="5">
    <location>
        <begin position="71"/>
        <end position="106"/>
    </location>
</feature>
<feature type="splice variant" id="VSP_029966" description="In isoform 2." evidence="4">
    <original>CYLVLGTEEPGTGVRLVALQLGLRRLLLLLSPQSPTHGLRSLATHTLHALTPLL</original>
    <variation>DYLAVGDGHRHGAVSVSLFIRSQ</variation>
    <location>
        <begin position="365"/>
        <end position="418"/>
    </location>
</feature>
<feature type="sequence variant" id="VAR_037615" description="In dbSNP:rs35138412.">
    <original>A</original>
    <variation>S</variation>
    <location>
        <position position="34"/>
    </location>
</feature>
<feature type="sequence variant" id="VAR_037616" description="In dbSNP:rs35002951.">
    <original>G</original>
    <variation>D</variation>
    <location>
        <position position="175"/>
    </location>
</feature>
<feature type="sequence variant" id="VAR_037617" description="In dbSNP:rs12610577.">
    <original>T</original>
    <variation>I</variation>
    <location>
        <position position="400"/>
    </location>
</feature>
<feature type="strand" evidence="8">
    <location>
        <begin position="9"/>
        <end position="16"/>
    </location>
</feature>
<feature type="turn" evidence="8">
    <location>
        <begin position="17"/>
        <end position="19"/>
    </location>
</feature>
<feature type="strand" evidence="8">
    <location>
        <begin position="22"/>
        <end position="29"/>
    </location>
</feature>
<feature type="strand" evidence="8">
    <location>
        <begin position="32"/>
        <end position="34"/>
    </location>
</feature>
<feature type="helix" evidence="8">
    <location>
        <begin position="40"/>
        <end position="54"/>
    </location>
</feature>
<feature type="turn" evidence="8">
    <location>
        <begin position="55"/>
        <end position="57"/>
    </location>
</feature>
<feature type="strand" evidence="8">
    <location>
        <begin position="59"/>
        <end position="65"/>
    </location>
</feature>
<feature type="strand" evidence="8">
    <location>
        <begin position="68"/>
        <end position="75"/>
    </location>
</feature>
<feature type="turn" evidence="8">
    <location>
        <begin position="76"/>
        <end position="78"/>
    </location>
</feature>
<feature type="strand" evidence="8">
    <location>
        <begin position="79"/>
        <end position="85"/>
    </location>
</feature>
<feature type="helix" evidence="8">
    <location>
        <begin position="92"/>
        <end position="110"/>
    </location>
</feature>
<feature type="turn" evidence="8">
    <location>
        <begin position="113"/>
        <end position="115"/>
    </location>
</feature>
<feature type="helix" evidence="8">
    <location>
        <begin position="121"/>
        <end position="127"/>
    </location>
</feature>
<feature type="helix" evidence="8">
    <location>
        <begin position="128"/>
        <end position="130"/>
    </location>
</feature>
<feature type="helix" evidence="8">
    <location>
        <begin position="131"/>
        <end position="139"/>
    </location>
</feature>
<feature type="helix" evidence="8">
    <location>
        <begin position="146"/>
        <end position="149"/>
    </location>
</feature>
<feature type="strand" evidence="8">
    <location>
        <begin position="150"/>
        <end position="154"/>
    </location>
</feature>
<feature type="helix" evidence="8">
    <location>
        <begin position="160"/>
        <end position="169"/>
    </location>
</feature>
<feature type="turn" evidence="8">
    <location>
        <begin position="170"/>
        <end position="175"/>
    </location>
</feature>
<feature type="strand" evidence="8">
    <location>
        <begin position="177"/>
        <end position="183"/>
    </location>
</feature>
<feature type="strand" evidence="8">
    <location>
        <begin position="186"/>
        <end position="190"/>
    </location>
</feature>
<feature type="helix" evidence="8">
    <location>
        <begin position="194"/>
        <end position="196"/>
    </location>
</feature>
<feature type="helix" evidence="8">
    <location>
        <begin position="199"/>
        <end position="211"/>
    </location>
</feature>
<feature type="strand" evidence="8">
    <location>
        <begin position="216"/>
        <end position="221"/>
    </location>
</feature>
<feature type="turn" evidence="8">
    <location>
        <begin position="225"/>
        <end position="227"/>
    </location>
</feature>
<feature type="strand" evidence="8">
    <location>
        <begin position="234"/>
        <end position="241"/>
    </location>
</feature>
<feature type="strand" evidence="8">
    <location>
        <begin position="244"/>
        <end position="250"/>
    </location>
</feature>
<feature type="strand" evidence="8">
    <location>
        <begin position="252"/>
        <end position="254"/>
    </location>
</feature>
<feature type="helix" evidence="8">
    <location>
        <begin position="256"/>
        <end position="259"/>
    </location>
</feature>
<feature type="helix" evidence="8">
    <location>
        <begin position="261"/>
        <end position="268"/>
    </location>
</feature>
<feature type="helix" evidence="8">
    <location>
        <begin position="269"/>
        <end position="271"/>
    </location>
</feature>
<feature type="helix" evidence="8">
    <location>
        <begin position="272"/>
        <end position="278"/>
    </location>
</feature>
<feature type="helix" evidence="8">
    <location>
        <begin position="279"/>
        <end position="281"/>
    </location>
</feature>
<feature type="strand" evidence="8">
    <location>
        <begin position="296"/>
        <end position="303"/>
    </location>
</feature>
<feature type="turn" evidence="8">
    <location>
        <begin position="304"/>
        <end position="307"/>
    </location>
</feature>
<feature type="strand" evidence="8">
    <location>
        <begin position="308"/>
        <end position="313"/>
    </location>
</feature>
<feature type="helix" evidence="8">
    <location>
        <begin position="323"/>
        <end position="337"/>
    </location>
</feature>
<feature type="turn" evidence="8">
    <location>
        <begin position="338"/>
        <end position="340"/>
    </location>
</feature>
<feature type="strand" evidence="8">
    <location>
        <begin position="363"/>
        <end position="368"/>
    </location>
</feature>
<feature type="strand" evidence="8">
    <location>
        <begin position="379"/>
        <end position="385"/>
    </location>
</feature>
<feature type="strand" evidence="8">
    <location>
        <begin position="388"/>
        <end position="394"/>
    </location>
</feature>
<feature type="strand" evidence="8">
    <location>
        <begin position="400"/>
        <end position="402"/>
    </location>
</feature>
<feature type="helix" evidence="8">
    <location>
        <begin position="403"/>
        <end position="414"/>
    </location>
</feature>
<feature type="turn" evidence="8">
    <location>
        <begin position="415"/>
        <end position="417"/>
    </location>
</feature>
<sequence length="418" mass="45679">MGEEGTGGTVHLLCLAASSGVPLFCRSSRGGAPARQQLPFSVIGSLNGVHMFGQNLEVQLSSARTENTTVVWKSFHDSITLIVLSSEVGISELRLERLLQMVFGAMVLLVGLEELTNIRNVERLKKDLRASYCLIDSFLGDSELIGDLTQCVDCVIPPEGSLLQEALSGFAEAAGTTFVSLVVSGRVVAATEGWWRLGTPEAVLLPWLVGSLPPQTARDYPVYLPHGSPTVPHRLLTLTLLPSLELCLLCGPSPPLSQLYPQLLERWWQPLLDPLRACLPLGPRALPSGFPLHTDILGLLLLHLELKRCLFTVEPLGDKEPSPEQRRRLLRNFYTLVTSTHFPPEPGPPEKTEDEVYQAQLPRACYLVLGTEEPGTGVRLVALQLGLRRLLLLLSPQSPTHGLRSLATHTLHALTPLL</sequence>